<keyword id="KW-0687">Ribonucleoprotein</keyword>
<keyword id="KW-0689">Ribosomal protein</keyword>
<keyword id="KW-0694">RNA-binding</keyword>
<keyword id="KW-0699">rRNA-binding</keyword>
<comment type="function">
    <text evidence="1">Binds as a heterodimer with protein bS6 to the central domain of the 16S rRNA, where it helps stabilize the platform of the 30S subunit.</text>
</comment>
<comment type="subunit">
    <text evidence="1">Part of the 30S ribosomal subunit. Forms a tight heterodimer with protein bS6.</text>
</comment>
<comment type="similarity">
    <text evidence="1">Belongs to the bacterial ribosomal protein bS18 family.</text>
</comment>
<protein>
    <recommendedName>
        <fullName evidence="1">Small ribosomal subunit protein bS18</fullName>
    </recommendedName>
    <alternativeName>
        <fullName evidence="2">30S ribosomal protein S18</fullName>
    </alternativeName>
</protein>
<name>RS18_STAES</name>
<dbReference type="EMBL" id="AE015929">
    <property type="protein sequence ID" value="AAO06013.1"/>
    <property type="molecule type" value="Genomic_DNA"/>
</dbReference>
<dbReference type="RefSeq" id="NP_765925.1">
    <property type="nucleotide sequence ID" value="NC_004461.1"/>
</dbReference>
<dbReference type="RefSeq" id="WP_001831354.1">
    <property type="nucleotide sequence ID" value="NZ_WBME01000004.1"/>
</dbReference>
<dbReference type="SMR" id="Q8CQP6"/>
<dbReference type="GeneID" id="93670581"/>
<dbReference type="KEGG" id="sep:SE_2370"/>
<dbReference type="PATRIC" id="fig|176280.10.peg.2309"/>
<dbReference type="eggNOG" id="COG0238">
    <property type="taxonomic scope" value="Bacteria"/>
</dbReference>
<dbReference type="HOGENOM" id="CLU_148710_2_2_9"/>
<dbReference type="OrthoDB" id="9812008at2"/>
<dbReference type="Proteomes" id="UP000001411">
    <property type="component" value="Chromosome"/>
</dbReference>
<dbReference type="GO" id="GO:0022627">
    <property type="term" value="C:cytosolic small ribosomal subunit"/>
    <property type="evidence" value="ECO:0007669"/>
    <property type="project" value="TreeGrafter"/>
</dbReference>
<dbReference type="GO" id="GO:0070181">
    <property type="term" value="F:small ribosomal subunit rRNA binding"/>
    <property type="evidence" value="ECO:0007669"/>
    <property type="project" value="TreeGrafter"/>
</dbReference>
<dbReference type="GO" id="GO:0003735">
    <property type="term" value="F:structural constituent of ribosome"/>
    <property type="evidence" value="ECO:0007669"/>
    <property type="project" value="InterPro"/>
</dbReference>
<dbReference type="GO" id="GO:0006412">
    <property type="term" value="P:translation"/>
    <property type="evidence" value="ECO:0007669"/>
    <property type="project" value="UniProtKB-UniRule"/>
</dbReference>
<dbReference type="FunFam" id="4.10.640.10:FF:000003">
    <property type="entry name" value="30S ribosomal protein S18"/>
    <property type="match status" value="1"/>
</dbReference>
<dbReference type="Gene3D" id="4.10.640.10">
    <property type="entry name" value="Ribosomal protein S18"/>
    <property type="match status" value="1"/>
</dbReference>
<dbReference type="HAMAP" id="MF_00270">
    <property type="entry name" value="Ribosomal_bS18"/>
    <property type="match status" value="1"/>
</dbReference>
<dbReference type="InterPro" id="IPR001648">
    <property type="entry name" value="Ribosomal_bS18"/>
</dbReference>
<dbReference type="InterPro" id="IPR018275">
    <property type="entry name" value="Ribosomal_bS18_CS"/>
</dbReference>
<dbReference type="InterPro" id="IPR036870">
    <property type="entry name" value="Ribosomal_bS18_sf"/>
</dbReference>
<dbReference type="NCBIfam" id="TIGR00165">
    <property type="entry name" value="S18"/>
    <property type="match status" value="1"/>
</dbReference>
<dbReference type="PANTHER" id="PTHR13479">
    <property type="entry name" value="30S RIBOSOMAL PROTEIN S18"/>
    <property type="match status" value="1"/>
</dbReference>
<dbReference type="PANTHER" id="PTHR13479:SF40">
    <property type="entry name" value="SMALL RIBOSOMAL SUBUNIT PROTEIN BS18M"/>
    <property type="match status" value="1"/>
</dbReference>
<dbReference type="Pfam" id="PF01084">
    <property type="entry name" value="Ribosomal_S18"/>
    <property type="match status" value="1"/>
</dbReference>
<dbReference type="PRINTS" id="PR00974">
    <property type="entry name" value="RIBOSOMALS18"/>
</dbReference>
<dbReference type="SUPFAM" id="SSF46911">
    <property type="entry name" value="Ribosomal protein S18"/>
    <property type="match status" value="1"/>
</dbReference>
<dbReference type="PROSITE" id="PS00057">
    <property type="entry name" value="RIBOSOMAL_S18"/>
    <property type="match status" value="1"/>
</dbReference>
<reference key="1">
    <citation type="journal article" date="2003" name="Mol. Microbiol.">
        <title>Genome-based analysis of virulence genes in a non-biofilm-forming Staphylococcus epidermidis strain (ATCC 12228).</title>
        <authorList>
            <person name="Zhang Y.-Q."/>
            <person name="Ren S.-X."/>
            <person name="Li H.-L."/>
            <person name="Wang Y.-X."/>
            <person name="Fu G."/>
            <person name="Yang J."/>
            <person name="Qin Z.-Q."/>
            <person name="Miao Y.-G."/>
            <person name="Wang W.-Y."/>
            <person name="Chen R.-S."/>
            <person name="Shen Y."/>
            <person name="Chen Z."/>
            <person name="Yuan Z.-H."/>
            <person name="Zhao G.-P."/>
            <person name="Qu D."/>
            <person name="Danchin A."/>
            <person name="Wen Y.-M."/>
        </authorList>
    </citation>
    <scope>NUCLEOTIDE SEQUENCE [LARGE SCALE GENOMIC DNA]</scope>
    <source>
        <strain>ATCC 12228 / FDA PCI 1200</strain>
    </source>
</reference>
<sequence length="80" mass="9294">MAGGPRRGGRRRKKVCYFTANGITHIDYKDTELLKRFISERGKILPRRVTGTSAKYQRMLTTAIKRARHMALLPYVKEEQ</sequence>
<organism>
    <name type="scientific">Staphylococcus epidermidis (strain ATCC 12228 / FDA PCI 1200)</name>
    <dbReference type="NCBI Taxonomy" id="176280"/>
    <lineage>
        <taxon>Bacteria</taxon>
        <taxon>Bacillati</taxon>
        <taxon>Bacillota</taxon>
        <taxon>Bacilli</taxon>
        <taxon>Bacillales</taxon>
        <taxon>Staphylococcaceae</taxon>
        <taxon>Staphylococcus</taxon>
    </lineage>
</organism>
<evidence type="ECO:0000255" key="1">
    <source>
        <dbReference type="HAMAP-Rule" id="MF_00270"/>
    </source>
</evidence>
<evidence type="ECO:0000305" key="2"/>
<gene>
    <name evidence="1" type="primary">rpsR</name>
    <name type="ordered locus">SE_2370</name>
</gene>
<accession>Q8CQP6</accession>
<feature type="chain" id="PRO_0000111230" description="Small ribosomal subunit protein bS18">
    <location>
        <begin position="1"/>
        <end position="80"/>
    </location>
</feature>
<proteinExistence type="inferred from homology"/>